<name>SYP_RICAH</name>
<comment type="function">
    <text evidence="1">Catalyzes the attachment of proline to tRNA(Pro) in a two-step reaction: proline is first activated by ATP to form Pro-AMP and then transferred to the acceptor end of tRNA(Pro).</text>
</comment>
<comment type="catalytic activity">
    <reaction evidence="1">
        <text>tRNA(Pro) + L-proline + ATP = L-prolyl-tRNA(Pro) + AMP + diphosphate</text>
        <dbReference type="Rhea" id="RHEA:14305"/>
        <dbReference type="Rhea" id="RHEA-COMP:9700"/>
        <dbReference type="Rhea" id="RHEA-COMP:9702"/>
        <dbReference type="ChEBI" id="CHEBI:30616"/>
        <dbReference type="ChEBI" id="CHEBI:33019"/>
        <dbReference type="ChEBI" id="CHEBI:60039"/>
        <dbReference type="ChEBI" id="CHEBI:78442"/>
        <dbReference type="ChEBI" id="CHEBI:78532"/>
        <dbReference type="ChEBI" id="CHEBI:456215"/>
        <dbReference type="EC" id="6.1.1.15"/>
    </reaction>
</comment>
<comment type="subunit">
    <text evidence="1">Homodimer.</text>
</comment>
<comment type="subcellular location">
    <subcellularLocation>
        <location evidence="1">Cytoplasm</location>
    </subcellularLocation>
</comment>
<comment type="similarity">
    <text evidence="1">Belongs to the class-II aminoacyl-tRNA synthetase family. ProS type 2 subfamily.</text>
</comment>
<accession>A8GN90</accession>
<proteinExistence type="inferred from homology"/>
<keyword id="KW-0030">Aminoacyl-tRNA synthetase</keyword>
<keyword id="KW-0067">ATP-binding</keyword>
<keyword id="KW-0963">Cytoplasm</keyword>
<keyword id="KW-0436">Ligase</keyword>
<keyword id="KW-0547">Nucleotide-binding</keyword>
<keyword id="KW-0648">Protein biosynthesis</keyword>
<feature type="chain" id="PRO_1000069183" description="Proline--tRNA ligase">
    <location>
        <begin position="1"/>
        <end position="427"/>
    </location>
</feature>
<reference key="1">
    <citation type="submission" date="2007-09" db="EMBL/GenBank/DDBJ databases">
        <title>Complete genome sequence of Rickettsia akari.</title>
        <authorList>
            <person name="Madan A."/>
            <person name="Fahey J."/>
            <person name="Helton E."/>
            <person name="Ketteman M."/>
            <person name="Madan A."/>
            <person name="Rodrigues S."/>
            <person name="Sanchez A."/>
            <person name="Whiting M."/>
            <person name="Dasch G."/>
            <person name="Eremeeva M."/>
        </authorList>
    </citation>
    <scope>NUCLEOTIDE SEQUENCE [LARGE SCALE GENOMIC DNA]</scope>
    <source>
        <strain>Hartford</strain>
    </source>
</reference>
<evidence type="ECO:0000255" key="1">
    <source>
        <dbReference type="HAMAP-Rule" id="MF_01570"/>
    </source>
</evidence>
<dbReference type="EC" id="6.1.1.15" evidence="1"/>
<dbReference type="EMBL" id="CP000847">
    <property type="protein sequence ID" value="ABV74865.1"/>
    <property type="molecule type" value="Genomic_DNA"/>
</dbReference>
<dbReference type="RefSeq" id="WP_012149498.1">
    <property type="nucleotide sequence ID" value="NC_009881.1"/>
</dbReference>
<dbReference type="SMR" id="A8GN90"/>
<dbReference type="STRING" id="293614.A1C_02875"/>
<dbReference type="KEGG" id="rak:A1C_02875"/>
<dbReference type="eggNOG" id="COG0442">
    <property type="taxonomic scope" value="Bacteria"/>
</dbReference>
<dbReference type="HOGENOM" id="CLU_016739_4_2_5"/>
<dbReference type="Proteomes" id="UP000006830">
    <property type="component" value="Chromosome"/>
</dbReference>
<dbReference type="GO" id="GO:0005829">
    <property type="term" value="C:cytosol"/>
    <property type="evidence" value="ECO:0007669"/>
    <property type="project" value="TreeGrafter"/>
</dbReference>
<dbReference type="GO" id="GO:0005524">
    <property type="term" value="F:ATP binding"/>
    <property type="evidence" value="ECO:0007669"/>
    <property type="project" value="UniProtKB-UniRule"/>
</dbReference>
<dbReference type="GO" id="GO:0004827">
    <property type="term" value="F:proline-tRNA ligase activity"/>
    <property type="evidence" value="ECO:0007669"/>
    <property type="project" value="UniProtKB-UniRule"/>
</dbReference>
<dbReference type="GO" id="GO:0006433">
    <property type="term" value="P:prolyl-tRNA aminoacylation"/>
    <property type="evidence" value="ECO:0007669"/>
    <property type="project" value="UniProtKB-UniRule"/>
</dbReference>
<dbReference type="CDD" id="cd00861">
    <property type="entry name" value="ProRS_anticodon_short"/>
    <property type="match status" value="1"/>
</dbReference>
<dbReference type="CDD" id="cd00779">
    <property type="entry name" value="ProRS_core_prok"/>
    <property type="match status" value="1"/>
</dbReference>
<dbReference type="FunFam" id="3.30.930.10:FF:000042">
    <property type="entry name" value="probable proline--tRNA ligase, mitochondrial"/>
    <property type="match status" value="1"/>
</dbReference>
<dbReference type="FunFam" id="3.40.50.800:FF:000032">
    <property type="entry name" value="Proline--tRNA ligase"/>
    <property type="match status" value="1"/>
</dbReference>
<dbReference type="Gene3D" id="3.40.50.800">
    <property type="entry name" value="Anticodon-binding domain"/>
    <property type="match status" value="1"/>
</dbReference>
<dbReference type="Gene3D" id="3.30.930.10">
    <property type="entry name" value="Bira Bifunctional Protein, Domain 2"/>
    <property type="match status" value="1"/>
</dbReference>
<dbReference type="HAMAP" id="MF_01570">
    <property type="entry name" value="Pro_tRNA_synth_type2"/>
    <property type="match status" value="1"/>
</dbReference>
<dbReference type="InterPro" id="IPR002314">
    <property type="entry name" value="aa-tRNA-synt_IIb"/>
</dbReference>
<dbReference type="InterPro" id="IPR006195">
    <property type="entry name" value="aa-tRNA-synth_II"/>
</dbReference>
<dbReference type="InterPro" id="IPR045864">
    <property type="entry name" value="aa-tRNA-synth_II/BPL/LPL"/>
</dbReference>
<dbReference type="InterPro" id="IPR004154">
    <property type="entry name" value="Anticodon-bd"/>
</dbReference>
<dbReference type="InterPro" id="IPR036621">
    <property type="entry name" value="Anticodon-bd_dom_sf"/>
</dbReference>
<dbReference type="InterPro" id="IPR002316">
    <property type="entry name" value="Pro-tRNA-ligase_IIa"/>
</dbReference>
<dbReference type="InterPro" id="IPR004500">
    <property type="entry name" value="Pro-tRNA-synth_IIa_bac-type"/>
</dbReference>
<dbReference type="InterPro" id="IPR050062">
    <property type="entry name" value="Pro-tRNA_synthetase"/>
</dbReference>
<dbReference type="InterPro" id="IPR023716">
    <property type="entry name" value="Prolyl-tRNA_ligase_IIa_type2"/>
</dbReference>
<dbReference type="InterPro" id="IPR044140">
    <property type="entry name" value="ProRS_anticodon_short"/>
</dbReference>
<dbReference type="InterPro" id="IPR033730">
    <property type="entry name" value="ProRS_core_prok"/>
</dbReference>
<dbReference type="NCBIfam" id="NF008979">
    <property type="entry name" value="PRK12325.1"/>
    <property type="match status" value="1"/>
</dbReference>
<dbReference type="NCBIfam" id="TIGR00409">
    <property type="entry name" value="proS_fam_II"/>
    <property type="match status" value="1"/>
</dbReference>
<dbReference type="PANTHER" id="PTHR42753">
    <property type="entry name" value="MITOCHONDRIAL RIBOSOME PROTEIN L39/PROLYL-TRNA LIGASE FAMILY MEMBER"/>
    <property type="match status" value="1"/>
</dbReference>
<dbReference type="PANTHER" id="PTHR42753:SF2">
    <property type="entry name" value="PROLINE--TRNA LIGASE"/>
    <property type="match status" value="1"/>
</dbReference>
<dbReference type="Pfam" id="PF03129">
    <property type="entry name" value="HGTP_anticodon"/>
    <property type="match status" value="1"/>
</dbReference>
<dbReference type="Pfam" id="PF00587">
    <property type="entry name" value="tRNA-synt_2b"/>
    <property type="match status" value="1"/>
</dbReference>
<dbReference type="PRINTS" id="PR01046">
    <property type="entry name" value="TRNASYNTHPRO"/>
</dbReference>
<dbReference type="SUPFAM" id="SSF52954">
    <property type="entry name" value="Class II aaRS ABD-related"/>
    <property type="match status" value="1"/>
</dbReference>
<dbReference type="SUPFAM" id="SSF55681">
    <property type="entry name" value="Class II aaRS and biotin synthetases"/>
    <property type="match status" value="1"/>
</dbReference>
<dbReference type="PROSITE" id="PS50862">
    <property type="entry name" value="AA_TRNA_LIGASE_II"/>
    <property type="match status" value="1"/>
</dbReference>
<sequence length="427" mass="48650">MLLSQYFLPVLKEEPSEAQVTSHKLMLRSGMIRQQAAGIYTWLPLGLKVLKNIENIVSLNMNKAGALEVLMPCIQPAHLWMESGRFNNYGKEMLKFQDRHDNTLLFGPTNEDMITDIFRHNIKSYKDLPKNLYHIQWKFRDEIRPRFGVMRGREFLMKDAYSFDINEENAVKTYNQMYKAYINTFRDLGVFAIPVIADNGPIGGKLSHEFHIIAETGESTIYYDKRFKTLKDNPDIDVDEIKSWYAAAEEKHDINKLPISEQEITSSKGIEVGHIFYIGSKYSVNMKALINDEHGKLAPVEMSSYGIGISRLVAAIIEANCDEKGIIWPFSVAPFKVSLINLNIHDSKCVELAAKAYKDLSDKNIEVLYDDTEARPGSKFATHDLIGSPHQIIIGPKKAANNIVELKDRKSGNIEDIEVENLINYIK</sequence>
<organism>
    <name type="scientific">Rickettsia akari (strain Hartford)</name>
    <dbReference type="NCBI Taxonomy" id="293614"/>
    <lineage>
        <taxon>Bacteria</taxon>
        <taxon>Pseudomonadati</taxon>
        <taxon>Pseudomonadota</taxon>
        <taxon>Alphaproteobacteria</taxon>
        <taxon>Rickettsiales</taxon>
        <taxon>Rickettsiaceae</taxon>
        <taxon>Rickettsieae</taxon>
        <taxon>Rickettsia</taxon>
        <taxon>spotted fever group</taxon>
    </lineage>
</organism>
<protein>
    <recommendedName>
        <fullName evidence="1">Proline--tRNA ligase</fullName>
        <ecNumber evidence="1">6.1.1.15</ecNumber>
    </recommendedName>
    <alternativeName>
        <fullName evidence="1">Prolyl-tRNA synthetase</fullName>
        <shortName evidence="1">ProRS</shortName>
    </alternativeName>
</protein>
<gene>
    <name evidence="1" type="primary">proS</name>
    <name type="ordered locus">A1C_02875</name>
</gene>